<evidence type="ECO:0000255" key="1">
    <source>
        <dbReference type="HAMAP-Rule" id="MF_00082"/>
    </source>
</evidence>
<name>ARGB_ALBFT</name>
<proteinExistence type="inferred from homology"/>
<feature type="chain" id="PRO_0000264746" description="Acetylglutamate kinase">
    <location>
        <begin position="1"/>
        <end position="296"/>
    </location>
</feature>
<feature type="binding site" evidence="1">
    <location>
        <begin position="69"/>
        <end position="70"/>
    </location>
    <ligand>
        <name>substrate</name>
    </ligand>
</feature>
<feature type="binding site" evidence="1">
    <location>
        <position position="91"/>
    </location>
    <ligand>
        <name>substrate</name>
    </ligand>
</feature>
<feature type="binding site" evidence="1">
    <location>
        <position position="193"/>
    </location>
    <ligand>
        <name>substrate</name>
    </ligand>
</feature>
<feature type="site" description="Transition state stabilizer" evidence="1">
    <location>
        <position position="34"/>
    </location>
</feature>
<feature type="site" description="Transition state stabilizer" evidence="1">
    <location>
        <position position="253"/>
    </location>
</feature>
<gene>
    <name evidence="1" type="primary">argB</name>
    <name type="ordered locus">Rfer_3524</name>
</gene>
<sequence length="296" mass="31479">MTDVSNIAPRDKAEILAQALPYIRKFHGKTMVIKYGGNAMTDPALQADFAEDVVLLKLVGINPVVVHGGGPQIEAALKRLGKKGEFIQGMRVTDAETMEIVEWVLGGEVQQDIVGLINQAGGKAVGLTGRDGGMIRAQKLKMRDNTDASKEYDVGQVGDIVSIDPSVVKALQDDAFIPVISPIGFGENNESYNINADVVAAKLATVLKAEKLMMLTNISGVLDKAGNLLTNLSARQIDDLFLDGTISGGMLPKISGALDAAKSGVNSVHIIDGRVPHVLLLEILTDQAFGTMIRSH</sequence>
<reference key="1">
    <citation type="submission" date="2006-02" db="EMBL/GenBank/DDBJ databases">
        <title>Complete sequence of chromosome of Rhodoferax ferrireducens DSM 15236.</title>
        <authorList>
            <person name="Copeland A."/>
            <person name="Lucas S."/>
            <person name="Lapidus A."/>
            <person name="Barry K."/>
            <person name="Detter J.C."/>
            <person name="Glavina del Rio T."/>
            <person name="Hammon N."/>
            <person name="Israni S."/>
            <person name="Pitluck S."/>
            <person name="Brettin T."/>
            <person name="Bruce D."/>
            <person name="Han C."/>
            <person name="Tapia R."/>
            <person name="Gilna P."/>
            <person name="Kiss H."/>
            <person name="Schmutz J."/>
            <person name="Larimer F."/>
            <person name="Land M."/>
            <person name="Kyrpides N."/>
            <person name="Ivanova N."/>
            <person name="Richardson P."/>
        </authorList>
    </citation>
    <scope>NUCLEOTIDE SEQUENCE [LARGE SCALE GENOMIC DNA]</scope>
    <source>
        <strain>ATCC BAA-621 / DSM 15236 / T118</strain>
    </source>
</reference>
<keyword id="KW-0028">Amino-acid biosynthesis</keyword>
<keyword id="KW-0055">Arginine biosynthesis</keyword>
<keyword id="KW-0067">ATP-binding</keyword>
<keyword id="KW-0963">Cytoplasm</keyword>
<keyword id="KW-0418">Kinase</keyword>
<keyword id="KW-0547">Nucleotide-binding</keyword>
<keyword id="KW-1185">Reference proteome</keyword>
<keyword id="KW-0808">Transferase</keyword>
<comment type="function">
    <text evidence="1">Catalyzes the ATP-dependent phosphorylation of N-acetyl-L-glutamate.</text>
</comment>
<comment type="catalytic activity">
    <reaction evidence="1">
        <text>N-acetyl-L-glutamate + ATP = N-acetyl-L-glutamyl 5-phosphate + ADP</text>
        <dbReference type="Rhea" id="RHEA:14629"/>
        <dbReference type="ChEBI" id="CHEBI:30616"/>
        <dbReference type="ChEBI" id="CHEBI:44337"/>
        <dbReference type="ChEBI" id="CHEBI:57936"/>
        <dbReference type="ChEBI" id="CHEBI:456216"/>
        <dbReference type="EC" id="2.7.2.8"/>
    </reaction>
</comment>
<comment type="pathway">
    <text evidence="1">Amino-acid biosynthesis; L-arginine biosynthesis; N(2)-acetyl-L-ornithine from L-glutamate: step 2/4.</text>
</comment>
<comment type="subcellular location">
    <subcellularLocation>
        <location evidence="1">Cytoplasm</location>
    </subcellularLocation>
</comment>
<comment type="similarity">
    <text evidence="1">Belongs to the acetylglutamate kinase family. ArgB subfamily.</text>
</comment>
<accession>Q21SM4</accession>
<dbReference type="EC" id="2.7.2.8" evidence="1"/>
<dbReference type="EMBL" id="CP000267">
    <property type="protein sequence ID" value="ABD71229.1"/>
    <property type="molecule type" value="Genomic_DNA"/>
</dbReference>
<dbReference type="RefSeq" id="WP_011465792.1">
    <property type="nucleotide sequence ID" value="NC_007908.1"/>
</dbReference>
<dbReference type="SMR" id="Q21SM4"/>
<dbReference type="STRING" id="338969.Rfer_3524"/>
<dbReference type="KEGG" id="rfr:Rfer_3524"/>
<dbReference type="eggNOG" id="COG0548">
    <property type="taxonomic scope" value="Bacteria"/>
</dbReference>
<dbReference type="HOGENOM" id="CLU_053680_0_0_4"/>
<dbReference type="OrthoDB" id="9803155at2"/>
<dbReference type="UniPathway" id="UPA00068">
    <property type="reaction ID" value="UER00107"/>
</dbReference>
<dbReference type="Proteomes" id="UP000008332">
    <property type="component" value="Chromosome"/>
</dbReference>
<dbReference type="GO" id="GO:0005737">
    <property type="term" value="C:cytoplasm"/>
    <property type="evidence" value="ECO:0007669"/>
    <property type="project" value="UniProtKB-SubCell"/>
</dbReference>
<dbReference type="GO" id="GO:0003991">
    <property type="term" value="F:acetylglutamate kinase activity"/>
    <property type="evidence" value="ECO:0007669"/>
    <property type="project" value="UniProtKB-UniRule"/>
</dbReference>
<dbReference type="GO" id="GO:0005524">
    <property type="term" value="F:ATP binding"/>
    <property type="evidence" value="ECO:0007669"/>
    <property type="project" value="UniProtKB-UniRule"/>
</dbReference>
<dbReference type="GO" id="GO:0042450">
    <property type="term" value="P:arginine biosynthetic process via ornithine"/>
    <property type="evidence" value="ECO:0007669"/>
    <property type="project" value="UniProtKB-UniRule"/>
</dbReference>
<dbReference type="GO" id="GO:0006526">
    <property type="term" value="P:L-arginine biosynthetic process"/>
    <property type="evidence" value="ECO:0007669"/>
    <property type="project" value="UniProtKB-UniPathway"/>
</dbReference>
<dbReference type="CDD" id="cd04250">
    <property type="entry name" value="AAK_NAGK-C"/>
    <property type="match status" value="1"/>
</dbReference>
<dbReference type="FunFam" id="3.40.1160.10:FF:000004">
    <property type="entry name" value="Acetylglutamate kinase"/>
    <property type="match status" value="1"/>
</dbReference>
<dbReference type="Gene3D" id="3.40.1160.10">
    <property type="entry name" value="Acetylglutamate kinase-like"/>
    <property type="match status" value="1"/>
</dbReference>
<dbReference type="HAMAP" id="MF_00082">
    <property type="entry name" value="ArgB"/>
    <property type="match status" value="1"/>
</dbReference>
<dbReference type="InterPro" id="IPR036393">
    <property type="entry name" value="AceGlu_kinase-like_sf"/>
</dbReference>
<dbReference type="InterPro" id="IPR004662">
    <property type="entry name" value="AcgluKinase_fam"/>
</dbReference>
<dbReference type="InterPro" id="IPR037528">
    <property type="entry name" value="ArgB"/>
</dbReference>
<dbReference type="InterPro" id="IPR001048">
    <property type="entry name" value="Asp/Glu/Uridylate_kinase"/>
</dbReference>
<dbReference type="InterPro" id="IPR001057">
    <property type="entry name" value="Glu/AcGlu_kinase"/>
</dbReference>
<dbReference type="InterPro" id="IPR041727">
    <property type="entry name" value="NAGK-C"/>
</dbReference>
<dbReference type="NCBIfam" id="TIGR00761">
    <property type="entry name" value="argB"/>
    <property type="match status" value="1"/>
</dbReference>
<dbReference type="PANTHER" id="PTHR23342">
    <property type="entry name" value="N-ACETYLGLUTAMATE SYNTHASE"/>
    <property type="match status" value="1"/>
</dbReference>
<dbReference type="PANTHER" id="PTHR23342:SF0">
    <property type="entry name" value="N-ACETYLGLUTAMATE SYNTHASE, MITOCHONDRIAL"/>
    <property type="match status" value="1"/>
</dbReference>
<dbReference type="Pfam" id="PF00696">
    <property type="entry name" value="AA_kinase"/>
    <property type="match status" value="1"/>
</dbReference>
<dbReference type="PIRSF" id="PIRSF000728">
    <property type="entry name" value="NAGK"/>
    <property type="match status" value="1"/>
</dbReference>
<dbReference type="PRINTS" id="PR00474">
    <property type="entry name" value="GLU5KINASE"/>
</dbReference>
<dbReference type="SUPFAM" id="SSF53633">
    <property type="entry name" value="Carbamate kinase-like"/>
    <property type="match status" value="1"/>
</dbReference>
<protein>
    <recommendedName>
        <fullName evidence="1">Acetylglutamate kinase</fullName>
        <ecNumber evidence="1">2.7.2.8</ecNumber>
    </recommendedName>
    <alternativeName>
        <fullName evidence="1">N-acetyl-L-glutamate 5-phosphotransferase</fullName>
    </alternativeName>
    <alternativeName>
        <fullName evidence="1">NAG kinase</fullName>
        <shortName evidence="1">NAGK</shortName>
    </alternativeName>
</protein>
<organism>
    <name type="scientific">Albidiferax ferrireducens (strain ATCC BAA-621 / DSM 15236 / T118)</name>
    <name type="common">Rhodoferax ferrireducens</name>
    <dbReference type="NCBI Taxonomy" id="338969"/>
    <lineage>
        <taxon>Bacteria</taxon>
        <taxon>Pseudomonadati</taxon>
        <taxon>Pseudomonadota</taxon>
        <taxon>Betaproteobacteria</taxon>
        <taxon>Burkholderiales</taxon>
        <taxon>Comamonadaceae</taxon>
        <taxon>Rhodoferax</taxon>
    </lineage>
</organism>